<dbReference type="PIR" id="JC2415">
    <property type="entry name" value="JC2415"/>
</dbReference>
<dbReference type="SMR" id="P81996"/>
<dbReference type="GO" id="GO:0005576">
    <property type="term" value="C:extracellular region"/>
    <property type="evidence" value="ECO:0007669"/>
    <property type="project" value="UniProtKB-SubCell"/>
</dbReference>
<dbReference type="GO" id="GO:0090729">
    <property type="term" value="F:toxin activity"/>
    <property type="evidence" value="ECO:0007669"/>
    <property type="project" value="UniProtKB-KW"/>
</dbReference>
<dbReference type="FunFam" id="3.10.100.10:FF:000087">
    <property type="entry name" value="Snaclec rhodocetin subunit delta"/>
    <property type="match status" value="1"/>
</dbReference>
<dbReference type="Gene3D" id="3.10.100.10">
    <property type="entry name" value="Mannose-Binding Protein A, subunit A"/>
    <property type="match status" value="1"/>
</dbReference>
<dbReference type="InterPro" id="IPR001304">
    <property type="entry name" value="C-type_lectin-like"/>
</dbReference>
<dbReference type="InterPro" id="IPR016186">
    <property type="entry name" value="C-type_lectin-like/link_sf"/>
</dbReference>
<dbReference type="InterPro" id="IPR050111">
    <property type="entry name" value="C-type_lectin/snaclec_domain"/>
</dbReference>
<dbReference type="InterPro" id="IPR018378">
    <property type="entry name" value="C-type_lectin_CS"/>
</dbReference>
<dbReference type="InterPro" id="IPR016187">
    <property type="entry name" value="CTDL_fold"/>
</dbReference>
<dbReference type="PANTHER" id="PTHR22803">
    <property type="entry name" value="MANNOSE, PHOSPHOLIPASE, LECTIN RECEPTOR RELATED"/>
    <property type="match status" value="1"/>
</dbReference>
<dbReference type="Pfam" id="PF00059">
    <property type="entry name" value="Lectin_C"/>
    <property type="match status" value="1"/>
</dbReference>
<dbReference type="SMART" id="SM00034">
    <property type="entry name" value="CLECT"/>
    <property type="match status" value="1"/>
</dbReference>
<dbReference type="SUPFAM" id="SSF56436">
    <property type="entry name" value="C-type lectin-like"/>
    <property type="match status" value="1"/>
</dbReference>
<dbReference type="PROSITE" id="PS00615">
    <property type="entry name" value="C_TYPE_LECTIN_1"/>
    <property type="match status" value="1"/>
</dbReference>
<dbReference type="PROSITE" id="PS50041">
    <property type="entry name" value="C_TYPE_LECTIN_2"/>
    <property type="match status" value="1"/>
</dbReference>
<organism>
    <name type="scientific">Echis carinatus sochureki</name>
    <name type="common">Saw-scaled viper</name>
    <dbReference type="NCBI Taxonomy" id="124223"/>
    <lineage>
        <taxon>Eukaryota</taxon>
        <taxon>Metazoa</taxon>
        <taxon>Chordata</taxon>
        <taxon>Craniata</taxon>
        <taxon>Vertebrata</taxon>
        <taxon>Euteleostomi</taxon>
        <taxon>Lepidosauria</taxon>
        <taxon>Squamata</taxon>
        <taxon>Bifurcata</taxon>
        <taxon>Unidentata</taxon>
        <taxon>Episquamata</taxon>
        <taxon>Toxicofera</taxon>
        <taxon>Serpentes</taxon>
        <taxon>Colubroidea</taxon>
        <taxon>Viperidae</taxon>
        <taxon>Viperinae</taxon>
        <taxon>Echis</taxon>
    </lineage>
</organism>
<comment type="function">
    <text evidence="2 4 5">Echicetin itself inhibits aggregation of washed platelets induced by vWF, thrombin or alboaggregin-A (PubMed:11290595, PubMed:8481512). However, when complexed with the pentameric plasma immunoglobulin Mkappa (IgMkappa), echicetin binds specifically to GPIb and activates platelets. This is caused by P-selectin expression and activation of alpha-IIb/beta-3 as well as tyrosine phosphorylation of several signal transduction molecules, including p53/56(LYN), p64, p72(SYK), p70 to p90, and p120 (PubMed:11290595). In vivo, it induces thrombocytopenia when injected into mice (PubMed:8481512), probably accounting of activation of platelets rather than inhibition (PubMed:11290595).</text>
</comment>
<comment type="subunit">
    <text evidence="2 5">Heterodimer of subunits alpha and beta; disulfide-linked (PubMed:9163349). Forms an active complex with the pentameric immunoglobuline Mkappa (IgMkappa) (PubMed:11290595).</text>
</comment>
<comment type="subcellular location">
    <subcellularLocation>
        <location evidence="3">Secreted</location>
    </subcellularLocation>
</comment>
<comment type="tissue specificity">
    <text evidence="6">Expressed by the venom gland.</text>
</comment>
<comment type="similarity">
    <text evidence="6">Belongs to the snaclec family.</text>
</comment>
<comment type="caution">
    <text evidence="6">The name echicetin has been given to 2 different proteins, this one from E.carinatus sochureki and another one for which the subspecies has not been specified (E.carinatus). Most experiments have been done on E.carinatus sochureki.</text>
</comment>
<proteinExistence type="evidence at protein level"/>
<accession>P81996</accession>
<name>SLB_ECHCS</name>
<evidence type="ECO:0000255" key="1">
    <source>
        <dbReference type="PROSITE-ProRule" id="PRU00040"/>
    </source>
</evidence>
<evidence type="ECO:0000269" key="2">
    <source>
    </source>
</evidence>
<evidence type="ECO:0000269" key="3">
    <source>
    </source>
</evidence>
<evidence type="ECO:0000269" key="4">
    <source>
    </source>
</evidence>
<evidence type="ECO:0000269" key="5">
    <source>
    </source>
</evidence>
<evidence type="ECO:0000305" key="6"/>
<feature type="chain" id="PRO_0000046702" description="Snaclec echicetin subunit beta">
    <location>
        <begin position="1"/>
        <end position="123"/>
    </location>
</feature>
<feature type="domain" description="C-type lectin" evidence="1">
    <location>
        <begin position="1"/>
        <end position="121"/>
    </location>
</feature>
<feature type="disulfide bond" evidence="1">
    <location>
        <begin position="2"/>
        <end position="13"/>
    </location>
</feature>
<feature type="disulfide bond" evidence="1">
    <location>
        <begin position="30"/>
        <end position="119"/>
    </location>
</feature>
<feature type="disulfide bond" description="Interchain (with C-81 in subunit alpha)" evidence="1">
    <location>
        <position position="75"/>
    </location>
</feature>
<feature type="disulfide bond" evidence="1">
    <location>
        <begin position="96"/>
        <end position="111"/>
    </location>
</feature>
<sequence>NCLPDWSVYEGYCYKVFKERMNWADAEKFCMKQVKDGHLVSFRNSKEVDFMISLAFPMLKMELVWIGLSDYWRDCYWEWSDGAQLDYKAWDNERHCFAAKTTDNQWMRRKCSGEFYFVCKCPA</sequence>
<reference key="1">
    <citation type="journal article" date="1994" name="Biochem. Biophys. Res. Commun.">
        <title>Isolation, characterization and amino acid sequence of echicetin beta subunit, a specific inhibitor of von Willebrand factor and thrombin interaction with glycoprotein Ib.</title>
        <authorList>
            <person name="Peng M."/>
            <person name="Holt J.C."/>
            <person name="Niewiarowski S."/>
        </authorList>
    </citation>
    <scope>PROTEIN SEQUENCE</scope>
    <scope>SUBCELLULAR LOCATION</scope>
    <source>
        <tissue>Venom</tissue>
    </source>
</reference>
<reference key="2">
    <citation type="journal article" date="1997" name="Biochem. J.">
        <title>Amino acid sequence of the alpha subunit and computer modelling of the alpha and beta subunits of echicetin from the venom of Echis carinatus (saw-scaled viper).</title>
        <authorList>
            <person name="Polgar J."/>
            <person name="Magnenat E.M."/>
            <person name="Peitsch M.C."/>
            <person name="Wells T.N.C."/>
            <person name="Saqi M.S.A."/>
            <person name="Clemetson K.J."/>
        </authorList>
    </citation>
    <scope>PROTEIN SEQUENCE OF 1-30</scope>
    <scope>FUNCTION</scope>
    <scope>SUBUNIT</scope>
    <source>
        <tissue>Venom</tissue>
    </source>
</reference>
<reference key="3">
    <citation type="journal article" date="1993" name="Blood">
        <title>Echicetin: a snake venom protein that inhibits binding of von Willebrand factor and alboaggregins to platelet glycoprotein Ib.</title>
        <authorList>
            <person name="Peng M."/>
            <person name="Lu W."/>
            <person name="Beviglia L."/>
            <person name="Niewiarowski S."/>
            <person name="Kirby E.P."/>
        </authorList>
    </citation>
    <scope>FUNCTION</scope>
    <source>
        <tissue>Venom</tissue>
    </source>
</reference>
<reference key="4">
    <citation type="journal article" date="2001" name="Blood">
        <title>Echicetin, a GPIb-binding snake C-type lectin from Echis carinatus, also contains a binding site for IgMkappa responsible for platelet agglutination in plasma and inducing signal transduction.</title>
        <authorList>
            <person name="Navdaev A."/>
            <person name="Dormann D."/>
            <person name="Clemetson J.M."/>
            <person name="Clemetson K.J."/>
        </authorList>
    </citation>
    <scope>FUNCTION</scope>
    <scope>SUBUNIT</scope>
</reference>
<keyword id="KW-0903">Direct protein sequencing</keyword>
<keyword id="KW-1015">Disulfide bond</keyword>
<keyword id="KW-1199">Hemostasis impairing toxin</keyword>
<keyword id="KW-1201">Platelet aggregation inhibiting toxin</keyword>
<keyword id="KW-0964">Secreted</keyword>
<keyword id="KW-0800">Toxin</keyword>
<protein>
    <recommendedName>
        <fullName>Snaclec echicetin subunit beta</fullName>
    </recommendedName>
</protein>